<feature type="signal peptide" evidence="1">
    <location>
        <begin position="1"/>
        <end position="31"/>
    </location>
</feature>
<feature type="chain" id="PRO_0000244672" description="Envelope glycoprotein gp160" evidence="1">
    <location>
        <begin position="32"/>
        <end position="851"/>
    </location>
</feature>
<feature type="chain" id="PRO_0000244673" description="Surface protein gp120" evidence="1">
    <location>
        <begin position="32"/>
        <end position="500"/>
    </location>
</feature>
<feature type="chain" id="PRO_0000244674" description="Transmembrane protein gp41" evidence="1">
    <location>
        <begin position="501"/>
        <end position="851"/>
    </location>
</feature>
<feature type="topological domain" description="Extracellular" evidence="1">
    <location>
        <begin position="32"/>
        <end position="672"/>
    </location>
</feature>
<feature type="transmembrane region" description="Helical" evidence="1">
    <location>
        <begin position="673"/>
        <end position="693"/>
    </location>
</feature>
<feature type="topological domain" description="Cytoplasmic" evidence="1">
    <location>
        <begin position="694"/>
        <end position="851"/>
    </location>
</feature>
<feature type="region of interest" description="V1" evidence="1">
    <location>
        <begin position="130"/>
        <end position="153"/>
    </location>
</feature>
<feature type="region of interest" description="V2" evidence="1">
    <location>
        <begin position="154"/>
        <end position="193"/>
    </location>
</feature>
<feature type="region of interest" description="V3" evidence="1">
    <location>
        <begin position="293"/>
        <end position="326"/>
    </location>
</feature>
<feature type="region of interest" description="CD4-binding loop" evidence="1">
    <location>
        <begin position="359"/>
        <end position="369"/>
    </location>
</feature>
<feature type="region of interest" description="V4" evidence="1">
    <location>
        <begin position="380"/>
        <end position="406"/>
    </location>
</feature>
<feature type="region of interest" description="V5">
    <location>
        <begin position="449"/>
        <end position="460"/>
    </location>
</feature>
<feature type="region of interest" description="V5" evidence="1">
    <location>
        <begin position="451"/>
        <end position="460"/>
    </location>
</feature>
<feature type="region of interest" description="Fusion peptide" evidence="1">
    <location>
        <begin position="501"/>
        <end position="520"/>
    </location>
</feature>
<feature type="region of interest" description="Immunosuppression" evidence="1">
    <location>
        <begin position="562"/>
        <end position="580"/>
    </location>
</feature>
<feature type="region of interest" description="MPER; binding to GalCer" evidence="1">
    <location>
        <begin position="650"/>
        <end position="671"/>
    </location>
</feature>
<feature type="coiled-coil region" evidence="1">
    <location>
        <begin position="621"/>
        <end position="655"/>
    </location>
</feature>
<feature type="short sequence motif" description="YXXL motif; contains endocytosis signal" evidence="1">
    <location>
        <begin position="700"/>
        <end position="703"/>
    </location>
</feature>
<feature type="site" description="Cleavage; by host furin" evidence="1">
    <location>
        <begin position="500"/>
        <end position="501"/>
    </location>
</feature>
<feature type="lipid moiety-binding region" description="S-palmitoyl cysteine; by host" evidence="1">
    <location>
        <position position="752"/>
    </location>
</feature>
<feature type="glycosylation site" description="N-linked (GlcNAc...) asparagine; by host" evidence="1">
    <location>
        <position position="87"/>
    </location>
</feature>
<feature type="glycosylation site" description="N-linked (GlcNAc...) asparagine; by host" evidence="1">
    <location>
        <position position="135"/>
    </location>
</feature>
<feature type="glycosylation site" description="N-linked (GlcNAc...) asparagine; by host" evidence="1">
    <location>
        <position position="141"/>
    </location>
</feature>
<feature type="glycosylation site" description="N-linked (GlcNAc...) asparagine; by host" evidence="1">
    <location>
        <position position="153"/>
    </location>
</feature>
<feature type="glycosylation site" description="N-linked (GlcNAc...) asparagine; by host" evidence="1">
    <location>
        <position position="157"/>
    </location>
</feature>
<feature type="glycosylation site" description="N-linked (GlcNAc...) asparagine; by host" evidence="1">
    <location>
        <position position="183"/>
    </location>
</feature>
<feature type="glycosylation site" description="N-linked (GlcNAc...) asparagine; by host" evidence="1">
    <location>
        <position position="194"/>
    </location>
</feature>
<feature type="glycosylation site" description="N-linked (GlcNAc...) asparagine; by host" evidence="1">
    <location>
        <position position="238"/>
    </location>
</feature>
<feature type="glycosylation site" description="N-linked (GlcNAc...) asparagine; by host" evidence="1">
    <location>
        <position position="259"/>
    </location>
</feature>
<feature type="glycosylation site" description="N-linked (GlcNAc...) asparagine; by host" evidence="1">
    <location>
        <position position="273"/>
    </location>
</feature>
<feature type="glycosylation site" description="N-linked (GlcNAc...) asparagine; by host" evidence="1">
    <location>
        <position position="286"/>
    </location>
</feature>
<feature type="glycosylation site" description="N-linked (GlcNAc...) asparagine; by host" evidence="1">
    <location>
        <position position="298"/>
    </location>
</feature>
<feature type="glycosylation site" description="N-linked (GlcNAc...) asparagine; by host" evidence="1">
    <location>
        <position position="328"/>
    </location>
</feature>
<feature type="glycosylation site" description="N-linked (GlcNAc...) asparagine; by host" evidence="1">
    <location>
        <position position="335"/>
    </location>
</feature>
<feature type="glycosylation site" description="N-linked (GlcNAc...) asparagine; by host" evidence="1">
    <location>
        <position position="351"/>
    </location>
</feature>
<feature type="glycosylation site" description="N-linked (GlcNAc...) asparagine; by host" evidence="1">
    <location>
        <position position="381"/>
    </location>
</feature>
<feature type="glycosylation site" description="N-linked (GlcNAc...) asparagine; by host" evidence="1">
    <location>
        <position position="387"/>
    </location>
</feature>
<feature type="glycosylation site" description="N-linked (GlcNAc...) asparagine; by host" evidence="1">
    <location>
        <position position="395"/>
    </location>
</feature>
<feature type="glycosylation site" description="N-linked (GlcNAc...) asparagine; by host" evidence="1">
    <location>
        <position position="401"/>
    </location>
</feature>
<feature type="glycosylation site" description="N-linked (GlcNAc...) asparagine; by host" evidence="1">
    <location>
        <position position="436"/>
    </location>
</feature>
<feature type="glycosylation site" description="N-linked (GlcNAc...) asparagine; by host" evidence="1">
    <location>
        <position position="599"/>
    </location>
</feature>
<feature type="glycosylation site" description="N-linked (GlcNAc...) asparagine; by host" evidence="1">
    <location>
        <position position="604"/>
    </location>
</feature>
<feature type="glycosylation site" description="N-linked (GlcNAc...) asparagine; by host" evidence="1">
    <location>
        <position position="613"/>
    </location>
</feature>
<feature type="glycosylation site" description="N-linked (GlcNAc...) asparagine; by host" evidence="1">
    <location>
        <position position="625"/>
    </location>
</feature>
<feature type="glycosylation site" description="N-linked (GlcNAc...) asparagine; by host" evidence="1">
    <location>
        <position position="662"/>
    </location>
</feature>
<feature type="disulfide bond" evidence="1">
    <location>
        <begin position="53"/>
        <end position="73"/>
    </location>
</feature>
<feature type="disulfide bond" evidence="1">
    <location>
        <begin position="118"/>
        <end position="202"/>
    </location>
</feature>
<feature type="disulfide bond" evidence="1">
    <location>
        <begin position="125"/>
        <end position="193"/>
    </location>
</feature>
<feature type="disulfide bond" evidence="1">
    <location>
        <begin position="130"/>
        <end position="154"/>
    </location>
</feature>
<feature type="disulfide bond" evidence="1">
    <location>
        <begin position="215"/>
        <end position="244"/>
    </location>
</feature>
<feature type="disulfide bond" evidence="1">
    <location>
        <begin position="225"/>
        <end position="236"/>
    </location>
</feature>
<feature type="disulfide bond" evidence="1">
    <location>
        <begin position="293"/>
        <end position="327"/>
    </location>
</feature>
<feature type="disulfide bond" evidence="1">
    <location>
        <begin position="373"/>
        <end position="433"/>
    </location>
</feature>
<feature type="disulfide bond" evidence="1">
    <location>
        <begin position="380"/>
        <end position="406"/>
    </location>
</feature>
<feature type="disulfide bond" evidence="1">
    <location>
        <begin position="586"/>
        <end position="592"/>
    </location>
</feature>
<sequence length="851" mass="96621">MKVMGIQRNCQQWWIWGILGFWMLMICNGMGNLWVTVYYGVPVWKDASPTLFCASDAKAYDTEVHNVWGTFACVPTDPSPQELGLENVTENFNMWKNDMVEQMHQDIISLWDQGLKPCVKLTPLCVTLNCNAIKNNTKVTNNSINSANDEMKNCSFNITTELRDKKRKAYALFYKLDIVPLNNGSTDYRLINCNTSTITQACPKVSLDPIPIHYCAPAGYAILKCRDKTFTGTGPCHNVSTVQCTHGIKPVVSTQLLLNGSIAEGETIIRFENLTNNAKIIIVQLNESVEITCTRPSNNTRESIRIGPGQTFYATGDIIGDIRQAHCNISEEKWNKTLQKVKEKLQKHFPNKTIEFKPSSGGDLEITTHSFNCGGEFFYCNTSNLFNSTKLELFNSSTNLNITLQCRIKQIINMWQGVGRAMYAPPIEGIIMCRSNITGLLLTRDGAKEPHSTKEIFRPEGGDMRDNWRSELYKYKVVEIKPLGVAPTKPKRRVVEREKRAALGALFLGFLGAAGSTMGAASITLTVQARQLLSGIVQQQSNLLKAIEAQQHMLQLTVWGIKQLQTRVLAIERHLRDQQLLGIWGCSGKLICTTAVPWNSSWSNKSQEEIWDNMTWMQWDREISNYTDIIYNLLEVSQNQQDKNEKDLLALDKWENLWNWFNITNWLWYIKIFIMIVGGVIGLRIIFAVLSIVNRVRQGYSPLSFQTLIPHPRGPDRLGGIEEEGGEQGRDRSIRLVNGFLAIFWDDLRSLCLFSYHRLRDLILIAARTVELLGRSSLKGLQRGWETLKYLGSLVQYWGLELKKSAINLLNTTAIVVGEGTDRFIELIQRIWRAFCNIPRRIRQGLEAALQ</sequence>
<proteinExistence type="inferred from homology"/>
<reference key="1">
    <citation type="journal article" date="1996" name="AIDS Res. Hum. Retroviruses">
        <title>Full-length sequence of an ethiopian human immunodeficiency virus type 1 (HIV-1) isolate of genetic subtype C.</title>
        <authorList>
            <person name="Salminen M.O."/>
            <person name="Johansson B."/>
            <person name="Sonnerborg A."/>
            <person name="Ayehunie S."/>
            <person name="Gotte D."/>
            <person name="Leinikki P."/>
            <person name="Burke D.S."/>
            <person name="McCutchan F.E."/>
        </authorList>
    </citation>
    <scope>NUCLEOTIDE SEQUENCE [GENOMIC DNA]</scope>
</reference>
<reference key="2">
    <citation type="journal article" date="2003" name="APMIS">
        <title>Pathogens target DC-SIGN to influence their fate DC-SIGN functions as a pathogen receptor with broad specificity.</title>
        <authorList>
            <person name="Geijtenbeek T.B."/>
            <person name="van Kooyk Y."/>
        </authorList>
    </citation>
    <scope>REVIEW</scope>
</reference>
<reference key="3">
    <citation type="journal article" date="2003" name="Biochim. Biophys. Acta">
        <title>The HIV Env-mediated fusion reaction.</title>
        <authorList>
            <person name="Gallo S.A."/>
            <person name="Finnegan C.M."/>
            <person name="Viard M."/>
            <person name="Raviv Y."/>
            <person name="Dimitrov A."/>
            <person name="Rawat S.S."/>
            <person name="Puri A."/>
            <person name="Durell S."/>
            <person name="Blumenthal R."/>
        </authorList>
    </citation>
    <scope>REVIEW</scope>
</reference>
<reference key="4">
    <citation type="journal article" date="2005" name="Cell Death Differ.">
        <title>Mechanisms of apoptosis induction by the HIV-1 envelope.</title>
        <authorList>
            <person name="Perfettini J.-L."/>
            <person name="Castedo M."/>
            <person name="Roumier T."/>
            <person name="Andreau K."/>
            <person name="Nardacci R."/>
            <person name="Piacentini M."/>
            <person name="Kroemer G."/>
        </authorList>
    </citation>
    <scope>REVIEW</scope>
</reference>
<reference key="5">
    <citation type="journal article" date="2005" name="AIDS Res. Hum. Retroviruses">
        <title>V3: HIV's switch-hitter.</title>
        <authorList>
            <person name="Hartley O."/>
            <person name="Klasse P.J."/>
            <person name="Sattentau Q.J."/>
            <person name="Moore J.P."/>
        </authorList>
    </citation>
    <scope>REVIEW</scope>
</reference>
<reference key="6">
    <citation type="journal article" date="2005" name="Drugs">
        <title>Emerging drug targets for antiretroviral therapy.</title>
        <authorList>
            <person name="Reeves J.D."/>
            <person name="Piefer A.J."/>
        </authorList>
    </citation>
    <scope>REVIEW</scope>
</reference>
<reference key="7">
    <citation type="journal article" date="2006" name="EMBO J.">
        <title>HIV and the chemokine system: 10 years later.</title>
        <authorList>
            <person name="Lusso P."/>
        </authorList>
    </citation>
    <scope>REVIEW</scope>
</reference>
<organismHost>
    <name type="scientific">Homo sapiens</name>
    <name type="common">Human</name>
    <dbReference type="NCBI Taxonomy" id="9606"/>
</organismHost>
<organism>
    <name type="scientific">Human immunodeficiency virus type 1 group M subtype C (isolate ETH2220)</name>
    <name type="common">HIV-1</name>
    <dbReference type="NCBI Taxonomy" id="388796"/>
    <lineage>
        <taxon>Viruses</taxon>
        <taxon>Riboviria</taxon>
        <taxon>Pararnavirae</taxon>
        <taxon>Artverviricota</taxon>
        <taxon>Revtraviricetes</taxon>
        <taxon>Ortervirales</taxon>
        <taxon>Retroviridae</taxon>
        <taxon>Orthoretrovirinae</taxon>
        <taxon>Lentivirus</taxon>
        <taxon>Human immunodeficiency virus type 1</taxon>
    </lineage>
</organism>
<dbReference type="EMBL" id="U46016">
    <property type="protein sequence ID" value="AAB36507.1"/>
    <property type="molecule type" value="Genomic_DNA"/>
</dbReference>
<dbReference type="SMR" id="Q75008"/>
<dbReference type="GlyCosmos" id="Q75008">
    <property type="glycosylation" value="25 sites, No reported glycans"/>
</dbReference>
<dbReference type="Proteomes" id="UP000007694">
    <property type="component" value="Segment"/>
</dbReference>
<dbReference type="GO" id="GO:0044175">
    <property type="term" value="C:host cell endosome membrane"/>
    <property type="evidence" value="ECO:0007669"/>
    <property type="project" value="UniProtKB-SubCell"/>
</dbReference>
<dbReference type="GO" id="GO:0020002">
    <property type="term" value="C:host cell plasma membrane"/>
    <property type="evidence" value="ECO:0007669"/>
    <property type="project" value="UniProtKB-SubCell"/>
</dbReference>
<dbReference type="GO" id="GO:0016020">
    <property type="term" value="C:membrane"/>
    <property type="evidence" value="ECO:0007669"/>
    <property type="project" value="UniProtKB-UniRule"/>
</dbReference>
<dbReference type="GO" id="GO:0019031">
    <property type="term" value="C:viral envelope"/>
    <property type="evidence" value="ECO:0007669"/>
    <property type="project" value="UniProtKB-KW"/>
</dbReference>
<dbReference type="GO" id="GO:0055036">
    <property type="term" value="C:virion membrane"/>
    <property type="evidence" value="ECO:0007669"/>
    <property type="project" value="UniProtKB-SubCell"/>
</dbReference>
<dbReference type="GO" id="GO:0005198">
    <property type="term" value="F:structural molecule activity"/>
    <property type="evidence" value="ECO:0007669"/>
    <property type="project" value="UniProtKB-UniRule"/>
</dbReference>
<dbReference type="GO" id="GO:0075512">
    <property type="term" value="P:clathrin-dependent endocytosis of virus by host cell"/>
    <property type="evidence" value="ECO:0007669"/>
    <property type="project" value="UniProtKB-UniRule"/>
</dbReference>
<dbReference type="GO" id="GO:0039654">
    <property type="term" value="P:fusion of virus membrane with host endosome membrane"/>
    <property type="evidence" value="ECO:0007669"/>
    <property type="project" value="UniProtKB-UniRule"/>
</dbReference>
<dbReference type="GO" id="GO:0019064">
    <property type="term" value="P:fusion of virus membrane with host plasma membrane"/>
    <property type="evidence" value="ECO:0007669"/>
    <property type="project" value="UniProtKB-UniRule"/>
</dbReference>
<dbReference type="GO" id="GO:1903908">
    <property type="term" value="P:positive regulation of plasma membrane raft polarization"/>
    <property type="evidence" value="ECO:0007669"/>
    <property type="project" value="UniProtKB-UniRule"/>
</dbReference>
<dbReference type="GO" id="GO:1903911">
    <property type="term" value="P:positive regulation of receptor clustering"/>
    <property type="evidence" value="ECO:0007669"/>
    <property type="project" value="UniProtKB-UniRule"/>
</dbReference>
<dbReference type="GO" id="GO:0019082">
    <property type="term" value="P:viral protein processing"/>
    <property type="evidence" value="ECO:0007669"/>
    <property type="project" value="UniProtKB-UniRule"/>
</dbReference>
<dbReference type="GO" id="GO:0019062">
    <property type="term" value="P:virion attachment to host cell"/>
    <property type="evidence" value="ECO:0007669"/>
    <property type="project" value="UniProtKB-UniRule"/>
</dbReference>
<dbReference type="CDD" id="cd09909">
    <property type="entry name" value="HIV-1-like_HR1-HR2"/>
    <property type="match status" value="1"/>
</dbReference>
<dbReference type="FunFam" id="1.10.287.210:FF:000001">
    <property type="entry name" value="Envelope glycoprotein gp160"/>
    <property type="match status" value="1"/>
</dbReference>
<dbReference type="FunFam" id="1.20.5.490:FF:000001">
    <property type="entry name" value="Envelope glycoprotein gp160"/>
    <property type="match status" value="1"/>
</dbReference>
<dbReference type="FunFam" id="2.170.40.20:FF:000003">
    <property type="entry name" value="Envelope glycoprotein gp160"/>
    <property type="match status" value="1"/>
</dbReference>
<dbReference type="FunFam" id="2.170.40.20:FF:000004">
    <property type="entry name" value="Envelope glycoprotein gp160"/>
    <property type="match status" value="1"/>
</dbReference>
<dbReference type="Gene3D" id="1.10.287.210">
    <property type="match status" value="1"/>
</dbReference>
<dbReference type="Gene3D" id="2.170.40.20">
    <property type="entry name" value="Human immunodeficiency virus 1, Gp160, envelope glycoprotein"/>
    <property type="match status" value="2"/>
</dbReference>
<dbReference type="Gene3D" id="1.20.5.490">
    <property type="entry name" value="Single helix bin"/>
    <property type="match status" value="1"/>
</dbReference>
<dbReference type="HAMAP" id="MF_04083">
    <property type="entry name" value="HIV_ENV"/>
    <property type="match status" value="1"/>
</dbReference>
<dbReference type="InterPro" id="IPR036377">
    <property type="entry name" value="Gp120_core_sf"/>
</dbReference>
<dbReference type="InterPro" id="IPR037527">
    <property type="entry name" value="Gp160"/>
</dbReference>
<dbReference type="InterPro" id="IPR000328">
    <property type="entry name" value="GP41-like"/>
</dbReference>
<dbReference type="InterPro" id="IPR000777">
    <property type="entry name" value="HIV1_Gp120"/>
</dbReference>
<dbReference type="Pfam" id="PF00516">
    <property type="entry name" value="GP120"/>
    <property type="match status" value="2"/>
</dbReference>
<dbReference type="Pfam" id="PF00517">
    <property type="entry name" value="GP41"/>
    <property type="match status" value="1"/>
</dbReference>
<dbReference type="SUPFAM" id="SSF56502">
    <property type="entry name" value="gp120 core"/>
    <property type="match status" value="2"/>
</dbReference>
<dbReference type="SUPFAM" id="SSF58069">
    <property type="entry name" value="Virus ectodomain"/>
    <property type="match status" value="1"/>
</dbReference>
<protein>
    <recommendedName>
        <fullName evidence="1">Envelope glycoprotein gp160</fullName>
    </recommendedName>
    <alternativeName>
        <fullName evidence="1">Env polyprotein</fullName>
    </alternativeName>
    <component>
        <recommendedName>
            <fullName evidence="1">Surface protein gp120</fullName>
            <shortName evidence="1">SU</shortName>
        </recommendedName>
        <alternativeName>
            <fullName evidence="1">Glycoprotein 120</fullName>
            <shortName evidence="1">gp120</shortName>
        </alternativeName>
    </component>
    <component>
        <recommendedName>
            <fullName evidence="1">Transmembrane protein gp41</fullName>
            <shortName evidence="1">TM</shortName>
        </recommendedName>
        <alternativeName>
            <fullName evidence="1">Glycoprotein 41</fullName>
            <shortName evidence="1">gp41</shortName>
        </alternativeName>
    </component>
</protein>
<accession>Q75008</accession>
<comment type="function">
    <molecule>Envelope glycoprotein gp160</molecule>
    <text evidence="1">Oligomerizes in the host endoplasmic reticulum into predominantly trimers. In a second time, gp160 transits in the host Golgi, where glycosylation is completed. The precursor is then proteolytically cleaved in the trans-Golgi and thereby activated by cellular furin or furin-like proteases to produce gp120 and gp41.</text>
</comment>
<comment type="function">
    <molecule>Surface protein gp120</molecule>
    <text evidence="1">Attaches the virus to the host lymphoid cell by binding to the primary receptor CD4. This interaction induces a structural rearrangement creating a high affinity binding site for a chemokine coreceptor like CXCR4 and/or CCR5. Acts as a ligand for CD209/DC-SIGN and CLEC4M/DC-SIGNR, which are respectively found on dendritic cells (DCs), and on endothelial cells of liver sinusoids and lymph node sinuses. These interactions allow capture of viral particles at mucosal surfaces by these cells and subsequent transmission to permissive cells. HIV subverts the migration properties of dendritic cells to gain access to CD4+ T-cells in lymph nodes. Virus transmission to permissive T-cells occurs either in trans (without DCs infection, through viral capture and transmission), or in cis (following DCs productive infection, through the usual CD4-gp120 interaction), thereby inducing a robust infection. In trans infection, bound virions remain infectious over days and it is proposed that they are not degraded, but protected in non-lysosomal acidic organelles within the DCs close to the cell membrane thus contributing to the viral infectious potential during DCs' migration from the periphery to the lymphoid tissues. On arrival at lymphoid tissues, intact virions recycle back to DCs' cell surface allowing virus transmission to CD4+ T-cells.</text>
</comment>
<comment type="function">
    <molecule>Transmembrane protein gp41</molecule>
    <text evidence="1">Acts as a class I viral fusion protein. Under the current model, the protein has at least 3 conformational states: pre-fusion native state, pre-hairpin intermediate state, and post-fusion hairpin state. During fusion of viral and target intracellular membranes, the coiled coil regions (heptad repeats) assume a trimer-of-hairpins structure, positioning the fusion peptide in close proximity to the C-terminal region of the ectodomain. The formation of this structure appears to drive apposition and subsequent fusion of viral and target cell membranes. Complete fusion occurs in host cell endosomes and is dynamin-dependent, however some lipid transfer might occur at the plasma membrane. The virus undergoes clathrin-dependent internalization long before endosomal fusion, thus minimizing the surface exposure of conserved viral epitopes during fusion and reducing the efficacy of inhibitors targeting these epitopes. Membranes fusion leads to delivery of the nucleocapsid into the cytoplasm.</text>
</comment>
<comment type="subunit">
    <molecule>Surface protein gp120</molecule>
    <text evidence="1">The mature envelope protein (Env) consists of a homotrimer of non-covalently associated gp120-gp41 heterodimers. The resulting complex protrudes from the virus surface as a spike. There seems to be as few as 10 spikes on the average virion. Interacts with host CD4, CCR5 and CXCR4. Gp120 also interacts with the C-type lectins CD209/DC-SIGN and CLEC4M/DC-SIGNR (collectively referred to as DC-SIGN(R)). Gp120 and gp41 interact with GalCer. Gp120 interacts with host ITGA4/ITGB7 complex; on CD4+ T-cells, this interaction results in rapid activation of integrin ITGAL/LFA-1, which facilitates efficient cell-to-cell spreading of HIV-1. Gp120 interacts with cell-associated heparan sulfate; this interaction increases virus infectivity on permissive cells and may be involved in infection of CD4- cells.</text>
</comment>
<comment type="subunit">
    <molecule>Transmembrane protein gp41</molecule>
    <text evidence="1">The mature envelope protein (Env) consists of a homotrimer of non-covalently associated gp120-gp41 heterodimers. The resulting complex protrudes from the virus surface as a spike. There seems to be as few as 10 spikes on the average virion.</text>
</comment>
<comment type="subcellular location">
    <molecule>Surface protein gp120</molecule>
    <subcellularLocation>
        <location evidence="1">Virion membrane</location>
        <topology evidence="1">Peripheral membrane protein</topology>
    </subcellularLocation>
    <subcellularLocation>
        <location evidence="1">Host cell membrane</location>
        <topology evidence="1">Peripheral membrane protein</topology>
    </subcellularLocation>
    <subcellularLocation>
        <location evidence="1">Host endosome membrane</location>
        <topology evidence="1">Single-pass type I membrane protein</topology>
    </subcellularLocation>
    <text evidence="1">The surface protein is not anchored to the viral envelope, but associates with the extravirion surface through its binding to TM. It is probably concentrated at the site of budding and incorporated into the virions possibly by contacts between the cytoplasmic tail of Env and the N-terminus of Gag.</text>
</comment>
<comment type="subcellular location">
    <molecule>Transmembrane protein gp41</molecule>
    <subcellularLocation>
        <location evidence="1">Virion membrane</location>
        <topology evidence="1">Single-pass type I membrane protein</topology>
    </subcellularLocation>
    <subcellularLocation>
        <location evidence="1">Host cell membrane</location>
        <topology evidence="1">Single-pass type I membrane protein</topology>
    </subcellularLocation>
    <subcellularLocation>
        <location evidence="1">Host endosome membrane</location>
        <topology evidence="1">Single-pass type I membrane protein</topology>
    </subcellularLocation>
    <text evidence="1">It is probably concentrated at the site of budding and incorporated into the virions possibly by contacts between the cytoplasmic tail of Env and the N-terminus of Gag.</text>
</comment>
<comment type="domain">
    <text evidence="1">Some of the most genetically diverse regions of the viral genome are present in Env. They are called variable regions 1 through 5 (V1 through V5). Coreceptor usage of gp120 is determined mainly by the primary structure of the third variable region (V3) in the outer domain of gp120. The sequence of V3 determines which coreceptor, CCR5 and/or CXCR4 (corresponding to R5/macrophage, X4/T cell and R5X4/T cell and macrophage tropism), is used to trigger the fusion potential of the Env complex, and hence which cells the virus can infect. Binding to CCR5 involves a region adjacent in addition to V3.</text>
</comment>
<comment type="domain">
    <text evidence="1">The membrane proximal external region (MPER) present in gp41 is a tryptophan-rich region recognized by the antibodies 2F5, Z13, and 4E10. MPER seems to play a role in fusion.</text>
</comment>
<comment type="domain">
    <text evidence="1">The 17 amino acids long immunosuppressive region is present in many retroviral envelope proteins. Synthetic peptides derived from this relatively conserved sequence inhibit immune function in vitro and in vivo.</text>
</comment>
<comment type="domain">
    <text evidence="1">The YXXL motif is involved in determining the exact site of viral release at the surface of infected mononuclear cells and promotes endocytosis. YXXL and di-leucine endocytosis motifs interact directly or indirectly with the clathrin adapter complexes, opperate independently, and their activities are not additive.</text>
</comment>
<comment type="domain">
    <text evidence="1">The CD4-binding region is targeted by the antibody b12.</text>
</comment>
<comment type="PTM">
    <text evidence="1">Highly glycosylated by host. The high number of glycan on the protein is reffered to as 'glycan shield' because it contributes to hide protein sequence from adaptive immune system.</text>
</comment>
<comment type="PTM">
    <text evidence="1">Palmitoylation of the transmembrane protein and of Env polyprotein (prior to its proteolytic cleavage) is essential for their association with host cell membrane lipid rafts. Palmitoylation is therefore required for envelope trafficking to classical lipid rafts, but not for viral replication.</text>
</comment>
<comment type="PTM">
    <text evidence="1">Specific enzymatic cleavages in vivo yield mature proteins. Envelope glycoproteins are synthesized as an inactive precursor that is heavily N-glycosylated and processed likely by host cell furin in the Golgi to yield the mature SU and TM proteins. The cleavage site between SU and TM requires the minimal sequence [KR]-X-[KR]-R. About 2 of the 9 disulfide bonds of gp41 are reduced by P4HB/PDI, following binding to CD4 receptor.</text>
</comment>
<comment type="miscellaneous">
    <text evidence="1">Inhibitors targeting HIV-1 viral envelope proteins are used as antiretroviral drugs. Attachment of virions to the cell surface via non-specific interactions and CD4 binding can be blocked by inhibitors that include cyanovirin-N, cyclotriazadisulfonamide analogs, PRO 2000, TNX 355 and PRO 542. In addition, BMS 806 can block CD4-induced conformational changes. Env interactions with the coreceptor molecules can be targeted by CCR5 antagonists including SCH-D, maraviroc (UK 427857) and aplaviroc (GW 873140), and the CXCR4 antagonist AMD 070. Fusion of viral and cellular membranes can be inhibited by peptides such as enfuvirtide and tifuvirtide (T 1249). Resistance to inhibitors associated with mutations in Env are observed. Most of the time, single mutations confer only a modest reduction in drug susceptibility. Combination of several mutations is usually required to develop a high-level drug resistance.</text>
</comment>
<comment type="miscellaneous">
    <text evidence="1">HIV-1 lineages are divided in three main groups, M (for Major), O (for Outlier), and N (for New, or Non-M, Non-O). The vast majority of strains found worldwide belong to the group M. Group O seems to be endemic to and largely confined to Cameroon and neighboring countries in West Central Africa, where these viruses represent a small minority of HIV-1 strains. The group N is represented by a limited number of isolates from Cameroonian persons. The group M is further subdivided in 9 clades or subtypes (A to D, F to H, J and K).</text>
</comment>
<comment type="similarity">
    <text evidence="1">Belongs to the HIV-1 env protein family.</text>
</comment>
<comment type="online information" name="hivdb">
    <link uri="https://hivdb.stanford.edu"/>
    <text>HIV drug resistance database</text>
</comment>
<comment type="online information" name="HIV drug resistance mutations">
    <link uri="https://www.iasusa.org/hiv-drug-resistance/hiv-drug-resistance-mutations/"/>
</comment>
<keyword id="KW-0014">AIDS</keyword>
<keyword id="KW-0053">Apoptosis</keyword>
<keyword id="KW-1165">Clathrin-mediated endocytosis of virus by host</keyword>
<keyword id="KW-0165">Cleavage on pair of basic residues</keyword>
<keyword id="KW-0175">Coiled coil</keyword>
<keyword id="KW-1015">Disulfide bond</keyword>
<keyword id="KW-1170">Fusion of virus membrane with host endosomal membrane</keyword>
<keyword id="KW-1168">Fusion of virus membrane with host membrane</keyword>
<keyword id="KW-0325">Glycoprotein</keyword>
<keyword id="KW-1032">Host cell membrane</keyword>
<keyword id="KW-1039">Host endosome</keyword>
<keyword id="KW-1043">Host membrane</keyword>
<keyword id="KW-0945">Host-virus interaction</keyword>
<keyword id="KW-0449">Lipoprotein</keyword>
<keyword id="KW-0472">Membrane</keyword>
<keyword id="KW-0564">Palmitate</keyword>
<keyword id="KW-1185">Reference proteome</keyword>
<keyword id="KW-0732">Signal</keyword>
<keyword id="KW-0812">Transmembrane</keyword>
<keyword id="KW-1133">Transmembrane helix</keyword>
<keyword id="KW-1161">Viral attachment to host cell</keyword>
<keyword id="KW-0261">Viral envelope protein</keyword>
<keyword id="KW-0899">Viral immunoevasion</keyword>
<keyword id="KW-1162">Viral penetration into host cytoplasm</keyword>
<keyword id="KW-0946">Virion</keyword>
<keyword id="KW-1164">Virus endocytosis by host</keyword>
<keyword id="KW-1160">Virus entry into host cell</keyword>
<evidence type="ECO:0000255" key="1">
    <source>
        <dbReference type="HAMAP-Rule" id="MF_04083"/>
    </source>
</evidence>
<name>ENV_HV1ET</name>
<gene>
    <name evidence="1" type="primary">env</name>
</gene>